<sequence>MSPSKMNATVGSTSEVEQKIRQELALSDEVTTIRRNAPAAVLYEDGLKENKTVISSSGALIAYSGVKTGRSPKDKRIVEEPTSKDEIWWGPVNKPCSERTWSINRERAADYLRTRDHIYIVDAFAGWDPKYRIKVRVVCARAYHALFMTNMLIRPTEEELAHFGEPDFTVWNAGQFPANLHTQDMSSKSTIEINFKAMEMIILGTEYAGEMKKGIFTVMFYLMPVHHNVLTLHSSANQGIQNGDVTLFFGLSGTGKTTLSADPHRLLIGDDEHCWSDHGVFNIEGGCYAKCINLSAEKEPEIFDAIKFGSVLENVIYDEKSHVVDYDDSSITENTRCAYPIDYIPSAKIPCLADSHPKNIILLTCDASGVLPPVSKLTPEQVMYHFISGYTSKMAGTEQGVTEPEPTFSSCFGQPFLALHPIRYATMLATKMSQHKANAYLINTGWTGSSYVSGGKRCPLKYTRAILDSIHDGSLANETYETLPIFNLQVPTKVNGVPAELLNPAKNWSQGESKYRGAVTNLANLFVQNFKIYQDRATPDVLAAGPQFE</sequence>
<organism>
    <name type="scientific">Saccharomyces cerevisiae (strain ATCC 204508 / S288c)</name>
    <name type="common">Baker's yeast</name>
    <dbReference type="NCBI Taxonomy" id="559292"/>
    <lineage>
        <taxon>Eukaryota</taxon>
        <taxon>Fungi</taxon>
        <taxon>Dikarya</taxon>
        <taxon>Ascomycota</taxon>
        <taxon>Saccharomycotina</taxon>
        <taxon>Saccharomycetes</taxon>
        <taxon>Saccharomycetales</taxon>
        <taxon>Saccharomycetaceae</taxon>
        <taxon>Saccharomyces</taxon>
    </lineage>
</organism>
<reference key="1">
    <citation type="journal article" date="1988" name="Nucleic Acids Res.">
        <title>Nucleotide sequence of the phosphoenolpyruvate carboxykinase gene from Saccharomyces cerevisiae.</title>
        <authorList>
            <person name="Stucka R."/>
            <person name="Veldes-Hevia K.D."/>
            <person name="Gancedo C."/>
            <person name="Feldmann H."/>
        </authorList>
    </citation>
    <scope>NUCLEOTIDE SEQUENCE [GENOMIC DNA]</scope>
</reference>
<reference key="2">
    <citation type="journal article" date="1995" name="Biochemistry">
        <title>Saccharomyces cerevisiae phosphoenolpyruvate carboxykinase: revised amino acid sequence, site-directed mutagenesis, and microenvironment characteristics of cysteines 365 and 458.</title>
        <authorList>
            <person name="Krautwurst H."/>
            <person name="Encinas M.V."/>
            <person name="Marcus F."/>
            <person name="Latshaw S.P."/>
            <person name="Kemp R.G."/>
            <person name="Frey P.A."/>
            <person name="Cardemil E."/>
        </authorList>
    </citation>
    <scope>NUCLEOTIDE SEQUENCE [MRNA]</scope>
    <scope>MUTAGENESIS</scope>
    <source>
        <strain>ATCC 204508 / S288c</strain>
    </source>
</reference>
<reference key="3">
    <citation type="journal article" date="1994" name="Nature">
        <title>Complete DNA sequence of yeast chromosome XI.</title>
        <authorList>
            <person name="Dujon B."/>
            <person name="Alexandraki D."/>
            <person name="Andre B."/>
            <person name="Ansorge W."/>
            <person name="Baladron V."/>
            <person name="Ballesta J.P.G."/>
            <person name="Banrevi A."/>
            <person name="Bolle P.-A."/>
            <person name="Bolotin-Fukuhara M."/>
            <person name="Bossier P."/>
            <person name="Bou G."/>
            <person name="Boyer J."/>
            <person name="Buitrago M.J."/>
            <person name="Cheret G."/>
            <person name="Colleaux L."/>
            <person name="Daignan-Fornier B."/>
            <person name="del Rey F."/>
            <person name="Dion C."/>
            <person name="Domdey H."/>
            <person name="Duesterhoeft A."/>
            <person name="Duesterhus S."/>
            <person name="Entian K.-D."/>
            <person name="Erfle H."/>
            <person name="Esteban P.F."/>
            <person name="Feldmann H."/>
            <person name="Fernandes L."/>
            <person name="Fobo G.M."/>
            <person name="Fritz C."/>
            <person name="Fukuhara H."/>
            <person name="Gabel C."/>
            <person name="Gaillon L."/>
            <person name="Garcia-Cantalejo J.M."/>
            <person name="Garcia-Ramirez J.J."/>
            <person name="Gent M.E."/>
            <person name="Ghazvini M."/>
            <person name="Goffeau A."/>
            <person name="Gonzalez A."/>
            <person name="Grothues D."/>
            <person name="Guerreiro P."/>
            <person name="Hegemann J.H."/>
            <person name="Hewitt N."/>
            <person name="Hilger F."/>
            <person name="Hollenberg C.P."/>
            <person name="Horaitis O."/>
            <person name="Indge K.J."/>
            <person name="Jacquier A."/>
            <person name="James C.M."/>
            <person name="Jauniaux J.-C."/>
            <person name="Jimenez A."/>
            <person name="Keuchel H."/>
            <person name="Kirchrath L."/>
            <person name="Kleine K."/>
            <person name="Koetter P."/>
            <person name="Legrain P."/>
            <person name="Liebl S."/>
            <person name="Louis E.J."/>
            <person name="Maia e Silva A."/>
            <person name="Marck C."/>
            <person name="Monnier A.-L."/>
            <person name="Moestl D."/>
            <person name="Mueller S."/>
            <person name="Obermaier B."/>
            <person name="Oliver S.G."/>
            <person name="Pallier C."/>
            <person name="Pascolo S."/>
            <person name="Pfeiffer F."/>
            <person name="Philippsen P."/>
            <person name="Planta R.J."/>
            <person name="Pohl F.M."/>
            <person name="Pohl T.M."/>
            <person name="Poehlmann R."/>
            <person name="Portetelle D."/>
            <person name="Purnelle B."/>
            <person name="Puzos V."/>
            <person name="Ramezani Rad M."/>
            <person name="Rasmussen S.W."/>
            <person name="Remacha M.A."/>
            <person name="Revuelta J.L."/>
            <person name="Richard G.-F."/>
            <person name="Rieger M."/>
            <person name="Rodrigues-Pousada C."/>
            <person name="Rose M."/>
            <person name="Rupp T."/>
            <person name="Santos M.A."/>
            <person name="Schwager C."/>
            <person name="Sensen C."/>
            <person name="Skala J."/>
            <person name="Soares H."/>
            <person name="Sor F."/>
            <person name="Stegemann J."/>
            <person name="Tettelin H."/>
            <person name="Thierry A."/>
            <person name="Tzermia M."/>
            <person name="Urrestarazu L.A."/>
            <person name="van Dyck L."/>
            <person name="van Vliet-Reedijk J.C."/>
            <person name="Valens M."/>
            <person name="Vandenbol M."/>
            <person name="Vilela C."/>
            <person name="Vissers S."/>
            <person name="von Wettstein D."/>
            <person name="Voss H."/>
            <person name="Wiemann S."/>
            <person name="Xu G."/>
            <person name="Zimmermann J."/>
            <person name="Haasemann M."/>
            <person name="Becker I."/>
            <person name="Mewes H.-W."/>
        </authorList>
    </citation>
    <scope>NUCLEOTIDE SEQUENCE [LARGE SCALE GENOMIC DNA]</scope>
    <source>
        <strain>ATCC 204508 / S288c</strain>
    </source>
</reference>
<reference key="4">
    <citation type="journal article" date="2014" name="G3 (Bethesda)">
        <title>The reference genome sequence of Saccharomyces cerevisiae: Then and now.</title>
        <authorList>
            <person name="Engel S.R."/>
            <person name="Dietrich F.S."/>
            <person name="Fisk D.G."/>
            <person name="Binkley G."/>
            <person name="Balakrishnan R."/>
            <person name="Costanzo M.C."/>
            <person name="Dwight S.S."/>
            <person name="Hitz B.C."/>
            <person name="Karra K."/>
            <person name="Nash R.S."/>
            <person name="Weng S."/>
            <person name="Wong E.D."/>
            <person name="Lloyd P."/>
            <person name="Skrzypek M.S."/>
            <person name="Miyasato S.R."/>
            <person name="Simison M."/>
            <person name="Cherry J.M."/>
        </authorList>
    </citation>
    <scope>GENOME REANNOTATION</scope>
    <source>
        <strain>ATCC 204508 / S288c</strain>
    </source>
</reference>
<reference key="5">
    <citation type="journal article" date="2007" name="Genome Res.">
        <title>Approaching a complete repository of sequence-verified protein-encoding clones for Saccharomyces cerevisiae.</title>
        <authorList>
            <person name="Hu Y."/>
            <person name="Rolfs A."/>
            <person name="Bhullar B."/>
            <person name="Murthy T.V.S."/>
            <person name="Zhu C."/>
            <person name="Berger M.F."/>
            <person name="Camargo A.A."/>
            <person name="Kelley F."/>
            <person name="McCarron S."/>
            <person name="Jepson D."/>
            <person name="Richardson A."/>
            <person name="Raphael J."/>
            <person name="Moreira D."/>
            <person name="Taycher E."/>
            <person name="Zuo D."/>
            <person name="Mohr S."/>
            <person name="Kane M.F."/>
            <person name="Williamson J."/>
            <person name="Simpson A.J.G."/>
            <person name="Bulyk M.L."/>
            <person name="Harlow E."/>
            <person name="Marsischky G."/>
            <person name="Kolodner R.D."/>
            <person name="LaBaer J."/>
        </authorList>
    </citation>
    <scope>NUCLEOTIDE SEQUENCE [GENOMIC DNA]</scope>
    <source>
        <strain>ATCC 204508 / S288c</strain>
    </source>
</reference>
<reference key="6">
    <citation type="journal article" date="1992" name="Biochim. Biophys. Acta">
        <title>ATP-dependent Saccharomyces cerevisiae phospho enol pyruvate carboxykinase: isolation and sequence of a peptide containing a highly reactive cysteine.</title>
        <authorList>
            <person name="Alvear M."/>
            <person name="Encinas M.V."/>
            <person name="Kemp R.G."/>
            <person name="Latshaw S.P."/>
            <person name="Cardemil E."/>
        </authorList>
    </citation>
    <scope>PROTEIN SEQUENCE OF 359-376</scope>
</reference>
<dbReference type="EC" id="4.1.1.49"/>
<dbReference type="EMBL" id="X13096">
    <property type="protein sequence ID" value="CAA31488.1"/>
    <property type="molecule type" value="Genomic_DNA"/>
</dbReference>
<dbReference type="EMBL" id="U24234">
    <property type="protein sequence ID" value="AAA76693.1"/>
    <property type="molecule type" value="mRNA"/>
</dbReference>
<dbReference type="EMBL" id="Z28322">
    <property type="protein sequence ID" value="CAA82177.1"/>
    <property type="molecule type" value="Genomic_DNA"/>
</dbReference>
<dbReference type="EMBL" id="AY723843">
    <property type="protein sequence ID" value="AAU09760.1"/>
    <property type="molecule type" value="Genomic_DNA"/>
</dbReference>
<dbReference type="EMBL" id="BK006944">
    <property type="protein sequence ID" value="DAA09248.1"/>
    <property type="molecule type" value="Genomic_DNA"/>
</dbReference>
<dbReference type="PIR" id="A56461">
    <property type="entry name" value="A56461"/>
</dbReference>
<dbReference type="RefSeq" id="NP_013023.3">
    <property type="nucleotide sequence ID" value="NM_001179887.3"/>
</dbReference>
<dbReference type="SMR" id="P10963"/>
<dbReference type="BioGRID" id="34228">
    <property type="interactions" value="123"/>
</dbReference>
<dbReference type="FunCoup" id="P10963">
    <property type="interactions" value="404"/>
</dbReference>
<dbReference type="IntAct" id="P10963">
    <property type="interactions" value="8"/>
</dbReference>
<dbReference type="MINT" id="P10963"/>
<dbReference type="STRING" id="4932.YKR097W"/>
<dbReference type="iPTMnet" id="P10963"/>
<dbReference type="PaxDb" id="4932-YKR097W"/>
<dbReference type="PeptideAtlas" id="P10963"/>
<dbReference type="EnsemblFungi" id="YKR097W_mRNA">
    <property type="protein sequence ID" value="YKR097W"/>
    <property type="gene ID" value="YKR097W"/>
</dbReference>
<dbReference type="GeneID" id="853972"/>
<dbReference type="KEGG" id="sce:YKR097W"/>
<dbReference type="AGR" id="SGD:S000001805"/>
<dbReference type="SGD" id="S000001805">
    <property type="gene designation" value="PCK1"/>
</dbReference>
<dbReference type="VEuPathDB" id="FungiDB:YKR097W"/>
<dbReference type="eggNOG" id="ENOG502QQI5">
    <property type="taxonomic scope" value="Eukaryota"/>
</dbReference>
<dbReference type="HOGENOM" id="CLU_018247_0_1_1"/>
<dbReference type="InParanoid" id="P10963"/>
<dbReference type="OMA" id="MRYAGEM"/>
<dbReference type="OrthoDB" id="184182at2759"/>
<dbReference type="BioCyc" id="YEAST:YKR097W-MONOMER"/>
<dbReference type="BRENDA" id="4.1.1.32">
    <property type="organism ID" value="984"/>
</dbReference>
<dbReference type="BRENDA" id="4.1.1.49">
    <property type="organism ID" value="984"/>
</dbReference>
<dbReference type="SABIO-RK" id="P10963"/>
<dbReference type="UniPathway" id="UPA00138"/>
<dbReference type="BioGRID-ORCS" id="853972">
    <property type="hits" value="0 hits in 10 CRISPR screens"/>
</dbReference>
<dbReference type="PRO" id="PR:P10963"/>
<dbReference type="Proteomes" id="UP000002311">
    <property type="component" value="Chromosome XI"/>
</dbReference>
<dbReference type="RNAct" id="P10963">
    <property type="molecule type" value="protein"/>
</dbReference>
<dbReference type="GO" id="GO:0005829">
    <property type="term" value="C:cytosol"/>
    <property type="evidence" value="ECO:0000314"/>
    <property type="project" value="SGD"/>
</dbReference>
<dbReference type="GO" id="GO:0005524">
    <property type="term" value="F:ATP binding"/>
    <property type="evidence" value="ECO:0007669"/>
    <property type="project" value="UniProtKB-KW"/>
</dbReference>
<dbReference type="GO" id="GO:0004612">
    <property type="term" value="F:phosphoenolpyruvate carboxykinase (ATP) activity"/>
    <property type="evidence" value="ECO:0000314"/>
    <property type="project" value="SGD"/>
</dbReference>
<dbReference type="GO" id="GO:0006094">
    <property type="term" value="P:gluconeogenesis"/>
    <property type="evidence" value="ECO:0000270"/>
    <property type="project" value="SGD"/>
</dbReference>
<dbReference type="CDD" id="cd00484">
    <property type="entry name" value="PEPCK_ATP"/>
    <property type="match status" value="1"/>
</dbReference>
<dbReference type="FunFam" id="2.170.8.10:FF:000001">
    <property type="entry name" value="Phosphoenolpyruvate carboxykinase (ATP)"/>
    <property type="match status" value="1"/>
</dbReference>
<dbReference type="FunFam" id="3.40.449.10:FF:000002">
    <property type="entry name" value="Phosphoenolpyruvate carboxykinase [ATP]"/>
    <property type="match status" value="1"/>
</dbReference>
<dbReference type="Gene3D" id="3.90.228.20">
    <property type="match status" value="1"/>
</dbReference>
<dbReference type="Gene3D" id="3.40.449.10">
    <property type="entry name" value="Phosphoenolpyruvate Carboxykinase, domain 1"/>
    <property type="match status" value="1"/>
</dbReference>
<dbReference type="Gene3D" id="2.170.8.10">
    <property type="entry name" value="Phosphoenolpyruvate Carboxykinase, domain 2"/>
    <property type="match status" value="1"/>
</dbReference>
<dbReference type="HAMAP" id="MF_00453">
    <property type="entry name" value="PEPCK_ATP"/>
    <property type="match status" value="1"/>
</dbReference>
<dbReference type="InterPro" id="IPR001272">
    <property type="entry name" value="PEP_carboxykinase_ATP"/>
</dbReference>
<dbReference type="InterPro" id="IPR013035">
    <property type="entry name" value="PEP_carboxykinase_C"/>
</dbReference>
<dbReference type="InterPro" id="IPR008210">
    <property type="entry name" value="PEP_carboxykinase_N"/>
</dbReference>
<dbReference type="InterPro" id="IPR015994">
    <property type="entry name" value="PEPCK_ATP_CS"/>
</dbReference>
<dbReference type="NCBIfam" id="TIGR00224">
    <property type="entry name" value="pckA"/>
    <property type="match status" value="1"/>
</dbReference>
<dbReference type="NCBIfam" id="NF006820">
    <property type="entry name" value="PRK09344.1-2"/>
    <property type="match status" value="1"/>
</dbReference>
<dbReference type="NCBIfam" id="NF006821">
    <property type="entry name" value="PRK09344.1-3"/>
    <property type="match status" value="1"/>
</dbReference>
<dbReference type="PANTHER" id="PTHR30031:SF0">
    <property type="entry name" value="PHOSPHOENOLPYRUVATE CARBOXYKINASE (ATP)"/>
    <property type="match status" value="1"/>
</dbReference>
<dbReference type="PANTHER" id="PTHR30031">
    <property type="entry name" value="PHOSPHOENOLPYRUVATE CARBOXYKINASE ATP"/>
    <property type="match status" value="1"/>
</dbReference>
<dbReference type="Pfam" id="PF01293">
    <property type="entry name" value="PEPCK_ATP"/>
    <property type="match status" value="1"/>
</dbReference>
<dbReference type="PIRSF" id="PIRSF006294">
    <property type="entry name" value="PEP_crbxkin"/>
    <property type="match status" value="1"/>
</dbReference>
<dbReference type="SUPFAM" id="SSF68923">
    <property type="entry name" value="PEP carboxykinase N-terminal domain"/>
    <property type="match status" value="1"/>
</dbReference>
<dbReference type="SUPFAM" id="SSF53795">
    <property type="entry name" value="PEP carboxykinase-like"/>
    <property type="match status" value="1"/>
</dbReference>
<dbReference type="PROSITE" id="PS00532">
    <property type="entry name" value="PEPCK_ATP"/>
    <property type="match status" value="1"/>
</dbReference>
<protein>
    <recommendedName>
        <fullName>Phosphoenolpyruvate carboxykinase (ATP)</fullName>
        <ecNumber>4.1.1.49</ecNumber>
    </recommendedName>
</protein>
<keyword id="KW-0067">ATP-binding</keyword>
<keyword id="KW-0210">Decarboxylase</keyword>
<keyword id="KW-0903">Direct protein sequencing</keyword>
<keyword id="KW-0312">Gluconeogenesis</keyword>
<keyword id="KW-0456">Lyase</keyword>
<keyword id="KW-0547">Nucleotide-binding</keyword>
<keyword id="KW-1185">Reference proteome</keyword>
<gene>
    <name type="primary">PCK1</name>
    <name type="synonym">PEPC</name>
    <name type="synonym">PPC1</name>
    <name type="ordered locus">YKR097W</name>
</gene>
<evidence type="ECO:0000255" key="1"/>
<evidence type="ECO:0000305" key="2"/>
<proteinExistence type="evidence at protein level"/>
<name>PCKA_YEAST</name>
<feature type="chain" id="PRO_0000203875" description="Phosphoenolpyruvate carboxykinase (ATP)">
    <location>
        <begin position="1"/>
        <end position="549"/>
    </location>
</feature>
<feature type="binding site" evidence="1">
    <location>
        <begin position="250"/>
        <end position="257"/>
    </location>
    <ligand>
        <name>ATP</name>
        <dbReference type="ChEBI" id="CHEBI:30616"/>
    </ligand>
</feature>
<feature type="sequence conflict" description="In Ref. 1." evidence="2" ref="1">
    <original>PCSERTWSINRER</original>
    <variation>HVLKEHGLSTVK</variation>
    <location>
        <begin position="95"/>
        <end position="107"/>
    </location>
</feature>
<feature type="sequence conflict" description="In Ref. 1; CAA31488." evidence="2" ref="1">
    <original>A</original>
    <variation>R</variation>
    <location>
        <position position="123"/>
    </location>
</feature>
<feature type="sequence conflict" description="In Ref. 1; CAA31488." evidence="2" ref="1">
    <original>H</original>
    <variation>Q</variation>
    <location>
        <position position="322"/>
    </location>
</feature>
<feature type="sequence conflict" description="In Ref. 5; AAU09760." evidence="2" ref="5">
    <original>P</original>
    <variation>L</variation>
    <location>
        <position position="357"/>
    </location>
</feature>
<feature type="sequence conflict" description="In Ref. 2; AAA76693." evidence="2" ref="2">
    <original>K</original>
    <variation>N</variation>
    <location>
        <position position="431"/>
    </location>
</feature>
<feature type="sequence conflict" description="In Ref. 1; CAA31488." evidence="2" ref="1">
    <original>AGPQFE</original>
    <variation>DWSSIRVNETC</variation>
    <location>
        <begin position="544"/>
        <end position="549"/>
    </location>
</feature>
<accession>P10963</accession>
<accession>D6VXF8</accession>
<accession>E9P963</accession>
<comment type="catalytic activity">
    <reaction>
        <text>oxaloacetate + ATP = phosphoenolpyruvate + ADP + CO2</text>
        <dbReference type="Rhea" id="RHEA:18617"/>
        <dbReference type="ChEBI" id="CHEBI:16452"/>
        <dbReference type="ChEBI" id="CHEBI:16526"/>
        <dbReference type="ChEBI" id="CHEBI:30616"/>
        <dbReference type="ChEBI" id="CHEBI:58702"/>
        <dbReference type="ChEBI" id="CHEBI:456216"/>
        <dbReference type="EC" id="4.1.1.49"/>
    </reaction>
</comment>
<comment type="pathway">
    <text>Carbohydrate biosynthesis; gluconeogenesis.</text>
</comment>
<comment type="subunit">
    <text>Homotetramer.</text>
</comment>
<comment type="interaction">
    <interactant intactId="EBI-13770">
        <id>P10963</id>
    </interactant>
    <interactant intactId="EBI-701">
        <id>P33203</id>
        <label>PRP40</label>
    </interactant>
    <organismsDiffer>false</organismsDiffer>
    <experiments>2</experiments>
</comment>
<comment type="interaction">
    <interactant intactId="EBI-13770">
        <id>P10963</id>
    </interactant>
    <interactant intactId="EBI-16219">
        <id>P39940</id>
        <label>RSP5</label>
    </interactant>
    <organismsDiffer>false</organismsDiffer>
    <experiments>2</experiments>
</comment>
<comment type="similarity">
    <text evidence="2">Belongs to the phosphoenolpyruvate carboxykinase (ATP) family.</text>
</comment>